<comment type="function">
    <text evidence="1">The glycine cleavage system catalyzes the degradation of glycine. The P protein binds the alpha-amino group of glycine through its pyridoxal phosphate cofactor; CO(2) is released and the remaining methylamine moiety is then transferred to the lipoamide cofactor of the H protein.</text>
</comment>
<comment type="catalytic activity">
    <reaction evidence="1">
        <text>N(6)-[(R)-lipoyl]-L-lysyl-[glycine-cleavage complex H protein] + glycine + H(+) = N(6)-[(R)-S(8)-aminomethyldihydrolipoyl]-L-lysyl-[glycine-cleavage complex H protein] + CO2</text>
        <dbReference type="Rhea" id="RHEA:24304"/>
        <dbReference type="Rhea" id="RHEA-COMP:10494"/>
        <dbReference type="Rhea" id="RHEA-COMP:10495"/>
        <dbReference type="ChEBI" id="CHEBI:15378"/>
        <dbReference type="ChEBI" id="CHEBI:16526"/>
        <dbReference type="ChEBI" id="CHEBI:57305"/>
        <dbReference type="ChEBI" id="CHEBI:83099"/>
        <dbReference type="ChEBI" id="CHEBI:83143"/>
        <dbReference type="EC" id="1.4.4.2"/>
    </reaction>
</comment>
<comment type="cofactor">
    <cofactor evidence="1">
        <name>pyridoxal 5'-phosphate</name>
        <dbReference type="ChEBI" id="CHEBI:597326"/>
    </cofactor>
</comment>
<comment type="subunit">
    <text evidence="1">The glycine cleavage system is composed of four proteins: P, T, L and H.</text>
</comment>
<comment type="similarity">
    <text evidence="1">Belongs to the GcvP family.</text>
</comment>
<organism>
    <name type="scientific">Leptospira interrogans serogroup Icterohaemorrhagiae serovar copenhageni (strain Fiocruz L1-130)</name>
    <dbReference type="NCBI Taxonomy" id="267671"/>
    <lineage>
        <taxon>Bacteria</taxon>
        <taxon>Pseudomonadati</taxon>
        <taxon>Spirochaetota</taxon>
        <taxon>Spirochaetia</taxon>
        <taxon>Leptospirales</taxon>
        <taxon>Leptospiraceae</taxon>
        <taxon>Leptospira</taxon>
    </lineage>
</organism>
<sequence>MNSTLQNQTKTNLEKVGTDPLDTFPRRHIGPNLQQTAEMLKELGLSSVEELIDKAVPVGIRLKKSLDLPKASTEHKILQNLKGIASQNQVFRSYIGAGYHSCIIPGVIQRNILENPGWYTAYTPYQAEISQGRLEALLNFQTMIIDLTGLEISNASLLDEGTAAAEAMFLAYSVRKNETAKKFFVSELCHPQTIDVVVTRANPLGIEVQIGNHESIELNEDFFGVLLQYPATDGKIIDYTSFIQRSHNVGAISTVAADLLALTLLKSPGEMGADIAVGSSQRFGLPLGFGGPHAGYFATKDEFKRSMPGRLIGVSKDSQGNSGLRLSLQTREQHIRRDKATSNICTAQVLLAVISSMYAVYHGPEGLKNIATRIYKFTSIFANVLKNAGFSITNEFFFDTITIQAGTKVQEILNRAYSKKINFREYKDGKIGITLDETVNLEDLKDLLEIFEIKNTDIEKLFVDVSNVPDSFKRKTSYLTHPVFQSHHTETKMLRYIRKLESRDLSLTTSMIPLGSCTMKLNATTEMYPVTWPEFGAIHPFAPADQTKGYKIIFEQLEKWLCEITGFAGVSLQPNAGSQGEYAGLLAIRRYHESRNESYRNVCLIPISAHGTNPASAAMAGFQVVVVSCDPNGNVDLEDLKAKAEEHKKDLAALMITYPSTHGVFEESVKEICQIVHSCGGQVYMDGANMNAQVGLTSPGEIGADVCHLNLHKTFCIPHGGGGPGVGPIGVAKHLVPFLPGHVLVDNATGNEHGAVSAAPWGSASIVLISWVYIALMGSEGLTNATRNSILNANYIAKRLEKVYPVLYKGKNGFVAHECILDLRPFKKSAGIEVEDVAKRLIDYGFHAPTMSFPVPGTLMIEPTESESLEELDRFCEAMLLIYQEILDVQSGTLDKTDNPLKNSPHTAAMVTSDRWDHLYPRERAAYPASWLKDHKFWPYVGRVDNVYGDRNLVCSCLPIESYQ</sequence>
<evidence type="ECO:0000255" key="1">
    <source>
        <dbReference type="HAMAP-Rule" id="MF_00711"/>
    </source>
</evidence>
<evidence type="ECO:0000256" key="2">
    <source>
        <dbReference type="SAM" id="MobiDB-lite"/>
    </source>
</evidence>
<name>GCSP_LEPIC</name>
<reference key="1">
    <citation type="journal article" date="2004" name="J. Bacteriol.">
        <title>Comparative genomics of two Leptospira interrogans serovars reveals novel insights into physiology and pathogenesis.</title>
        <authorList>
            <person name="Nascimento A.L.T.O."/>
            <person name="Ko A.I."/>
            <person name="Martins E.A.L."/>
            <person name="Monteiro-Vitorello C.B."/>
            <person name="Ho P.L."/>
            <person name="Haake D.A."/>
            <person name="Verjovski-Almeida S."/>
            <person name="Hartskeerl R.A."/>
            <person name="Marques M.V."/>
            <person name="Oliveira M.C."/>
            <person name="Menck C.F.M."/>
            <person name="Leite L.C.C."/>
            <person name="Carrer H."/>
            <person name="Coutinho L.L."/>
            <person name="Degrave W.M."/>
            <person name="Dellagostin O.A."/>
            <person name="El-Dorry H."/>
            <person name="Ferro E.S."/>
            <person name="Ferro M.I.T."/>
            <person name="Furlan L.R."/>
            <person name="Gamberini M."/>
            <person name="Giglioti E.A."/>
            <person name="Goes-Neto A."/>
            <person name="Goldman G.H."/>
            <person name="Goldman M.H.S."/>
            <person name="Harakava R."/>
            <person name="Jeronimo S.M.B."/>
            <person name="Junqueira-de-Azevedo I.L.M."/>
            <person name="Kimura E.T."/>
            <person name="Kuramae E.E."/>
            <person name="Lemos E.G.M."/>
            <person name="Lemos M.V.F."/>
            <person name="Marino C.L."/>
            <person name="Nunes L.R."/>
            <person name="de Oliveira R.C."/>
            <person name="Pereira G.G."/>
            <person name="Reis M.S."/>
            <person name="Schriefer A."/>
            <person name="Siqueira W.J."/>
            <person name="Sommer P."/>
            <person name="Tsai S.M."/>
            <person name="Simpson A.J.G."/>
            <person name="Ferro J.A."/>
            <person name="Camargo L.E.A."/>
            <person name="Kitajima J.P."/>
            <person name="Setubal J.C."/>
            <person name="Van Sluys M.A."/>
        </authorList>
    </citation>
    <scope>NUCLEOTIDE SEQUENCE [LARGE SCALE GENOMIC DNA]</scope>
    <source>
        <strain>Fiocruz L1-130</strain>
    </source>
</reference>
<proteinExistence type="inferred from homology"/>
<accession>Q72VI8</accession>
<dbReference type="EC" id="1.4.4.2" evidence="1"/>
<dbReference type="EMBL" id="AE016823">
    <property type="protein sequence ID" value="AAS68936.1"/>
    <property type="molecule type" value="Genomic_DNA"/>
</dbReference>
<dbReference type="RefSeq" id="WP_001089345.1">
    <property type="nucleotide sequence ID" value="NC_005823.1"/>
</dbReference>
<dbReference type="SMR" id="Q72VI8"/>
<dbReference type="GeneID" id="61143664"/>
<dbReference type="KEGG" id="lic:LIC_10309"/>
<dbReference type="HOGENOM" id="CLU_004620_3_2_12"/>
<dbReference type="Proteomes" id="UP000007037">
    <property type="component" value="Chromosome I"/>
</dbReference>
<dbReference type="GO" id="GO:0005829">
    <property type="term" value="C:cytosol"/>
    <property type="evidence" value="ECO:0007669"/>
    <property type="project" value="TreeGrafter"/>
</dbReference>
<dbReference type="GO" id="GO:0005960">
    <property type="term" value="C:glycine cleavage complex"/>
    <property type="evidence" value="ECO:0007669"/>
    <property type="project" value="TreeGrafter"/>
</dbReference>
<dbReference type="GO" id="GO:0016594">
    <property type="term" value="F:glycine binding"/>
    <property type="evidence" value="ECO:0007669"/>
    <property type="project" value="TreeGrafter"/>
</dbReference>
<dbReference type="GO" id="GO:0004375">
    <property type="term" value="F:glycine dehydrogenase (decarboxylating) activity"/>
    <property type="evidence" value="ECO:0007669"/>
    <property type="project" value="UniProtKB-EC"/>
</dbReference>
<dbReference type="GO" id="GO:0030170">
    <property type="term" value="F:pyridoxal phosphate binding"/>
    <property type="evidence" value="ECO:0007669"/>
    <property type="project" value="TreeGrafter"/>
</dbReference>
<dbReference type="GO" id="GO:0019464">
    <property type="term" value="P:glycine decarboxylation via glycine cleavage system"/>
    <property type="evidence" value="ECO:0007669"/>
    <property type="project" value="UniProtKB-UniRule"/>
</dbReference>
<dbReference type="CDD" id="cd00613">
    <property type="entry name" value="GDC-P"/>
    <property type="match status" value="2"/>
</dbReference>
<dbReference type="FunFam" id="3.90.1150.10:FF:000025">
    <property type="entry name" value="Glycine cleavage system P protein"/>
    <property type="match status" value="1"/>
</dbReference>
<dbReference type="FunFam" id="3.40.640.10:FF:000005">
    <property type="entry name" value="Glycine dehydrogenase (decarboxylating), mitochondrial"/>
    <property type="match status" value="1"/>
</dbReference>
<dbReference type="FunFam" id="3.90.1150.10:FF:000007">
    <property type="entry name" value="Glycine dehydrogenase (decarboxylating), mitochondrial"/>
    <property type="match status" value="1"/>
</dbReference>
<dbReference type="FunFam" id="3.40.640.10:FF:000007">
    <property type="entry name" value="glycine dehydrogenase (Decarboxylating), mitochondrial"/>
    <property type="match status" value="1"/>
</dbReference>
<dbReference type="Gene3D" id="3.90.1150.10">
    <property type="entry name" value="Aspartate Aminotransferase, domain 1"/>
    <property type="match status" value="2"/>
</dbReference>
<dbReference type="Gene3D" id="3.40.640.10">
    <property type="entry name" value="Type I PLP-dependent aspartate aminotransferase-like (Major domain)"/>
    <property type="match status" value="2"/>
</dbReference>
<dbReference type="HAMAP" id="MF_00711">
    <property type="entry name" value="GcvP"/>
    <property type="match status" value="1"/>
</dbReference>
<dbReference type="InterPro" id="IPR003437">
    <property type="entry name" value="GcvP"/>
</dbReference>
<dbReference type="InterPro" id="IPR049316">
    <property type="entry name" value="GDC-P_C"/>
</dbReference>
<dbReference type="InterPro" id="IPR049315">
    <property type="entry name" value="GDC-P_N"/>
</dbReference>
<dbReference type="InterPro" id="IPR020581">
    <property type="entry name" value="GDC_P"/>
</dbReference>
<dbReference type="InterPro" id="IPR015424">
    <property type="entry name" value="PyrdxlP-dep_Trfase"/>
</dbReference>
<dbReference type="InterPro" id="IPR015421">
    <property type="entry name" value="PyrdxlP-dep_Trfase_major"/>
</dbReference>
<dbReference type="InterPro" id="IPR015422">
    <property type="entry name" value="PyrdxlP-dep_Trfase_small"/>
</dbReference>
<dbReference type="NCBIfam" id="TIGR00461">
    <property type="entry name" value="gcvP"/>
    <property type="match status" value="1"/>
</dbReference>
<dbReference type="NCBIfam" id="NF003346">
    <property type="entry name" value="PRK04366.1"/>
    <property type="match status" value="1"/>
</dbReference>
<dbReference type="PANTHER" id="PTHR11773:SF1">
    <property type="entry name" value="GLYCINE DEHYDROGENASE (DECARBOXYLATING), MITOCHONDRIAL"/>
    <property type="match status" value="1"/>
</dbReference>
<dbReference type="PANTHER" id="PTHR11773">
    <property type="entry name" value="GLYCINE DEHYDROGENASE, DECARBOXYLATING"/>
    <property type="match status" value="1"/>
</dbReference>
<dbReference type="Pfam" id="PF21478">
    <property type="entry name" value="GcvP2_C"/>
    <property type="match status" value="1"/>
</dbReference>
<dbReference type="Pfam" id="PF02347">
    <property type="entry name" value="GDC-P"/>
    <property type="match status" value="2"/>
</dbReference>
<dbReference type="SUPFAM" id="SSF53383">
    <property type="entry name" value="PLP-dependent transferases"/>
    <property type="match status" value="2"/>
</dbReference>
<keyword id="KW-0560">Oxidoreductase</keyword>
<keyword id="KW-0663">Pyridoxal phosphate</keyword>
<gene>
    <name evidence="1" type="primary">gcvP</name>
    <name type="ordered locus">LIC_10309</name>
</gene>
<feature type="chain" id="PRO_0000166916" description="Glycine dehydrogenase (decarboxylating)">
    <location>
        <begin position="1"/>
        <end position="964"/>
    </location>
</feature>
<feature type="region of interest" description="Disordered" evidence="2">
    <location>
        <begin position="1"/>
        <end position="21"/>
    </location>
</feature>
<feature type="compositionally biased region" description="Polar residues" evidence="2">
    <location>
        <begin position="1"/>
        <end position="11"/>
    </location>
</feature>
<feature type="modified residue" description="N6-(pyridoxal phosphate)lysine" evidence="1">
    <location>
        <position position="713"/>
    </location>
</feature>
<protein>
    <recommendedName>
        <fullName evidence="1">Glycine dehydrogenase (decarboxylating)</fullName>
        <ecNumber evidence="1">1.4.4.2</ecNumber>
    </recommendedName>
    <alternativeName>
        <fullName evidence="1">Glycine cleavage system P-protein</fullName>
    </alternativeName>
    <alternativeName>
        <fullName evidence="1">Glycine decarboxylase</fullName>
    </alternativeName>
    <alternativeName>
        <fullName evidence="1">Glycine dehydrogenase (aminomethyl-transferring)</fullName>
    </alternativeName>
</protein>